<dbReference type="EC" id="4.2.1.167" evidence="10 11 12"/>
<dbReference type="EMBL" id="X14252">
    <property type="protein sequence ID" value="CAA32466.1"/>
    <property type="molecule type" value="Genomic_DNA"/>
</dbReference>
<dbReference type="EMBL" id="CP001859">
    <property type="protein sequence ID" value="ADB48168.1"/>
    <property type="molecule type" value="Genomic_DNA"/>
</dbReference>
<dbReference type="PIR" id="S04478">
    <property type="entry name" value="DWDXBF"/>
</dbReference>
<dbReference type="RefSeq" id="WP_012939151.1">
    <property type="nucleotide sequence ID" value="NC_013740.1"/>
</dbReference>
<dbReference type="SMR" id="P11570"/>
<dbReference type="STRING" id="591001.Acfer_1814"/>
<dbReference type="GeneID" id="78335510"/>
<dbReference type="KEGG" id="afn:Acfer_1814"/>
<dbReference type="eggNOG" id="COG1775">
    <property type="taxonomic scope" value="Bacteria"/>
</dbReference>
<dbReference type="HOGENOM" id="CLU_053697_0_0_9"/>
<dbReference type="OrthoDB" id="355459at2"/>
<dbReference type="BioCyc" id="MetaCyc:MONOMER-1044"/>
<dbReference type="BRENDA" id="4.2.1.167">
    <property type="organism ID" value="85"/>
</dbReference>
<dbReference type="UniPathway" id="UPA00533">
    <property type="reaction ID" value="UER00687"/>
</dbReference>
<dbReference type="Proteomes" id="UP000001902">
    <property type="component" value="Chromosome"/>
</dbReference>
<dbReference type="GO" id="GO:0005737">
    <property type="term" value="C:cytoplasm"/>
    <property type="evidence" value="ECO:0007669"/>
    <property type="project" value="UniProtKB-SubCell"/>
</dbReference>
<dbReference type="GO" id="GO:0043717">
    <property type="term" value="F:2-hydroxyglutaryl-CoA dehydratase activity"/>
    <property type="evidence" value="ECO:0007669"/>
    <property type="project" value="RHEA"/>
</dbReference>
<dbReference type="GO" id="GO:0051539">
    <property type="term" value="F:4 iron, 4 sulfur cluster binding"/>
    <property type="evidence" value="ECO:0007669"/>
    <property type="project" value="UniProtKB-KW"/>
</dbReference>
<dbReference type="GO" id="GO:0046872">
    <property type="term" value="F:metal ion binding"/>
    <property type="evidence" value="ECO:0007669"/>
    <property type="project" value="UniProtKB-KW"/>
</dbReference>
<dbReference type="GO" id="GO:0019552">
    <property type="term" value="P:glutamate catabolic process via 2-hydroxyglutarate"/>
    <property type="evidence" value="ECO:0007669"/>
    <property type="project" value="UniProtKB-UniPathway"/>
</dbReference>
<dbReference type="Gene3D" id="1.20.1270.370">
    <property type="match status" value="1"/>
</dbReference>
<dbReference type="Gene3D" id="3.40.50.11890">
    <property type="match status" value="1"/>
</dbReference>
<dbReference type="Gene3D" id="3.40.50.11900">
    <property type="match status" value="1"/>
</dbReference>
<dbReference type="InterPro" id="IPR010327">
    <property type="entry name" value="FldB/FldC_alpha/beta"/>
</dbReference>
<dbReference type="PANTHER" id="PTHR30548">
    <property type="entry name" value="2-HYDROXYGLUTARYL-COA DEHYDRATASE, D-COMPONENT-RELATED"/>
    <property type="match status" value="1"/>
</dbReference>
<dbReference type="PANTHER" id="PTHR30548:SF5">
    <property type="entry name" value="SUBUNIT OF OXYGEN-SENSITIVE 2-HYDROXYISOCAPROYL-COA DEHYDRATASE"/>
    <property type="match status" value="1"/>
</dbReference>
<dbReference type="Pfam" id="PF06050">
    <property type="entry name" value="HGD-D"/>
    <property type="match status" value="1"/>
</dbReference>
<evidence type="ECO:0000269" key="1">
    <source>
    </source>
</evidence>
<evidence type="ECO:0000269" key="2">
    <source>
    </source>
</evidence>
<evidence type="ECO:0000269" key="3">
    <source>
    </source>
</evidence>
<evidence type="ECO:0000269" key="4">
    <source>
    </source>
</evidence>
<evidence type="ECO:0000269" key="5">
    <source>
    </source>
</evidence>
<evidence type="ECO:0000303" key="6">
    <source>
    </source>
</evidence>
<evidence type="ECO:0000303" key="7">
    <source>
    </source>
</evidence>
<evidence type="ECO:0000305" key="8"/>
<evidence type="ECO:0000305" key="9">
    <source>
    </source>
</evidence>
<evidence type="ECO:0000305" key="10">
    <source>
    </source>
</evidence>
<evidence type="ECO:0000305" key="11">
    <source>
    </source>
</evidence>
<evidence type="ECO:0000305" key="12">
    <source>
    </source>
</evidence>
<accession>P11570</accession>
<accession>D2RM66</accession>
<comment type="function">
    <text evidence="3 4 5">Involved in the fermentation of L-glutamate via the hydroxyglutarate pathway (PubMed:3691501). Catalyzes the reversible syn-elimination of water from (R)-2-hydroxyglutaryl-CoA to yield (E)-glutaconyl-CoA (PubMed:3691501, PubMed:7398622, PubMed:7607244). The dehydration mechanism involves a transient one electron reduction of the thioester from (R)-2-hydroxyglutaryl-CoA, generating a ketyl radical (PubMed:7607244). Prior to (E)-glutaconyl-CoA formation, the ketyl radical is subsequently reoxidized by electron transfer back to the HgdA-HgdB complex (CompD) to avoid change in oxidation state of the substrate (PubMed:7607244). The appropriate redox state of dehydratase HgdA-HgdB complex (CompD) is maintained by HgdC (CompA) via hydrolysis of ATP and ATP-dependent electron transfer (PubMed:7607244). Since the electron is recycled, the dehydratase is able to perform several turnovers with only catalytic amounts of ATP and substoichiometric amounts of HgdC (CompA) (PubMed:7607244).</text>
</comment>
<comment type="catalytic activity">
    <reaction evidence="10 11 12">
        <text>(R)-2-hydroxyglutaryl-CoA = (2E)-glutaconyl-CoA + H2O</text>
        <dbReference type="Rhea" id="RHEA:42448"/>
        <dbReference type="ChEBI" id="CHEBI:15377"/>
        <dbReference type="ChEBI" id="CHEBI:57353"/>
        <dbReference type="ChEBI" id="CHEBI:132946"/>
        <dbReference type="EC" id="4.2.1.167"/>
    </reaction>
</comment>
<comment type="cofactor">
    <cofactor evidence="1 3 5">
        <name>[4Fe-4S] cluster</name>
        <dbReference type="ChEBI" id="CHEBI:49883"/>
    </cofactor>
    <text evidence="1 5 10">Binds 1 [4Fe-4S] cluster per heterodimer.</text>
</comment>
<comment type="cofactor">
    <cofactor evidence="1 5">
        <name>FMN</name>
        <dbReference type="ChEBI" id="CHEBI:58210"/>
    </cofactor>
    <text evidence="1 5">Binds 1 FMN per heterodimer.</text>
</comment>
<comment type="cofactor">
    <cofactor evidence="1 5">
        <name>Mg(2+)</name>
        <dbReference type="ChEBI" id="CHEBI:18420"/>
    </cofactor>
</comment>
<comment type="activity regulation">
    <text evidence="5">Activated by the HgdC. Reversibly inactivated by oxidants such as 2-nitrophenol, 3-nitrophenol, 4-nitrophenol, 4-nitrobenzoate, carbonyl cyanide 4-(trifluoromethoxy)phenylhydrazone (FCCP) and chloramphenicol. Irreversibly inactivated by oxidants such as hydroxylamine and nitrite.</text>
</comment>
<comment type="pathway">
    <text evidence="10">Amino-acid degradation; L-glutamate degradation via hydroxyglutarate pathway; crotonoyl-CoA from L-glutamate: step 4/5.</text>
</comment>
<comment type="subunit">
    <text evidence="5 10">The (R)-2-hydroxyglutaryl-CoA dehydratase enzyme system is a heterodimer composed of an alpha subunit (HgdA) and a beta subunit (HgdB).</text>
</comment>
<comment type="subcellular location">
    <subcellularLocation>
        <location evidence="9">Cytoplasm</location>
    </subcellularLocation>
</comment>
<comment type="similarity">
    <text evidence="8">Belongs to the FldB/FldC dehydratase alpha/beta subunit family.</text>
</comment>
<proteinExistence type="evidence at protein level"/>
<feature type="initiator methionine" description="Removed" evidence="2 3">
    <location>
        <position position="1"/>
    </location>
</feature>
<feature type="chain" id="PRO_0000083964" description="(R)-2-hydroxyglutaryl-CoA dehydratase, subunit beta">
    <location>
        <begin position="2"/>
        <end position="379"/>
    </location>
</feature>
<feature type="sequence conflict" description="In Ref. 1; CAA32466." evidence="8" ref="1">
    <original>M</original>
    <variation>T</variation>
    <location>
        <position position="244"/>
    </location>
</feature>
<feature type="sequence conflict" description="In Ref. 1; CAA32466." evidence="8" ref="1">
    <original>Q</original>
    <variation>H</variation>
    <location>
        <position position="283"/>
    </location>
</feature>
<feature type="sequence conflict" description="In Ref. 1; CAA32466." evidence="8" ref="1">
    <original>C</original>
    <variation>G</variation>
    <location>
        <position position="313"/>
    </location>
</feature>
<sequence>MAISALIEEFQKVSASPKTMLAKYKAQGKKAIGCLPYYVPEELVYAAGMVPMGVWGCNGKQEVRSKEYCASFYCTIAQQSLEMLLDGTLDGLDGIITPVLCDTLRPMSQNFKVAMKDKMPVIFLAHPQVRQNAAGKQFTYDAYSEVKGHLEEICGHEITNDAILDAIKVYNKSRAARREFCKLANEHPDLIPASVRATVLRAAYFMLKDEYTEKLEELNKELAAAPAGKFDGHKVVVSGIIYNMPGILKAMDDNKLAIAADDCAYESRSFAVDAPEDLDNGLQALAVQFSKQKNDVLLYDPEFAKNTRSEHVCNLVKESGAEGLIVFMMQFCDPEEMEYPDLKKALDAHHIPHVKIGVDQMTRDFGQAQTALEAFAESL</sequence>
<keyword id="KW-0004">4Fe-4S</keyword>
<keyword id="KW-0963">Cytoplasm</keyword>
<keyword id="KW-0903">Direct protein sequencing</keyword>
<keyword id="KW-0285">Flavoprotein</keyword>
<keyword id="KW-0288">FMN</keyword>
<keyword id="KW-0408">Iron</keyword>
<keyword id="KW-0411">Iron-sulfur</keyword>
<keyword id="KW-0456">Lyase</keyword>
<keyword id="KW-0460">Magnesium</keyword>
<keyword id="KW-0479">Metal-binding</keyword>
<keyword id="KW-1185">Reference proteome</keyword>
<protein>
    <recommendedName>
        <fullName evidence="7">(R)-2-hydroxyglutaryl-CoA dehydratase, subunit beta</fullName>
        <ecNumber evidence="10 11 12">4.2.1.167</ecNumber>
    </recommendedName>
    <alternativeName>
        <fullName evidence="7">(R)-2-hydroxyglutaryl-CoA dehydratase, component D</fullName>
    </alternativeName>
</protein>
<name>HGDB_ACIFV</name>
<gene>
    <name evidence="6" type="primary">hgdB</name>
    <name type="ordered locus">Acfer_1814</name>
</gene>
<organism>
    <name type="scientific">Acidaminococcus fermentans (strain ATCC 25085 / DSM 20731 / CCUG 9996 / CIP 106432 / VR4)</name>
    <dbReference type="NCBI Taxonomy" id="591001"/>
    <lineage>
        <taxon>Bacteria</taxon>
        <taxon>Bacillati</taxon>
        <taxon>Bacillota</taxon>
        <taxon>Negativicutes</taxon>
        <taxon>Acidaminococcales</taxon>
        <taxon>Acidaminococcaceae</taxon>
        <taxon>Acidaminococcus</taxon>
    </lineage>
</organism>
<reference key="1">
    <citation type="journal article" date="1989" name="Eur. J. Biochem.">
        <title>Cloning and sequencing of the genes of 2-hydoxyglutaryl-CoA dehydratase from Acidaminococcus fermentans.</title>
        <authorList>
            <person name="Dutscho R."/>
            <person name="Wohlfarth G."/>
            <person name="Buckel P."/>
            <person name="Buckel W."/>
        </authorList>
    </citation>
    <scope>NUCLEOTIDE SEQUENCE [GENOMIC DNA]</scope>
    <scope>PROTEIN SEQUENCE OF 2-44</scope>
    <scope>SUBCELLULAR LOCATION</scope>
</reference>
<reference key="2">
    <citation type="journal article" date="2010" name="Stand. Genomic Sci.">
        <title>Complete genome sequence of Acidaminococcus fermentans type strain (VR4).</title>
        <authorList>
            <person name="Chang Y.J."/>
            <person name="Pukall R."/>
            <person name="Saunders E."/>
            <person name="Lapidus A."/>
            <person name="Copeland A."/>
            <person name="Nolan M."/>
            <person name="Glavina Del Rio T."/>
            <person name="Lucas S."/>
            <person name="Chen F."/>
            <person name="Tice H."/>
            <person name="Cheng J.F."/>
            <person name="Han C."/>
            <person name="Detter J.C."/>
            <person name="Bruce D."/>
            <person name="Goodwin L."/>
            <person name="Pitluck S."/>
            <person name="Mikhailova N."/>
            <person name="Liolios K."/>
            <person name="Pati A."/>
            <person name="Ivanova N."/>
            <person name="Mavromatis K."/>
            <person name="Chen A."/>
            <person name="Palaniappan K."/>
            <person name="Land M."/>
            <person name="Hauser L."/>
            <person name="Jeffries C.D."/>
            <person name="Brettin T."/>
            <person name="Rohde M."/>
            <person name="Goker M."/>
            <person name="Bristow J."/>
            <person name="Eisen J.A."/>
            <person name="Markowitz V."/>
            <person name="Hugenholtz P."/>
            <person name="Kyrpides N.C."/>
            <person name="Klenk H.P."/>
        </authorList>
    </citation>
    <scope>NUCLEOTIDE SEQUENCE [LARGE SCALE GENOMIC DNA]</scope>
    <source>
        <strain>ATCC 25085 / DSM 20731 / CCUG 9996 / CIP 106432 / VR4</strain>
    </source>
</reference>
<reference key="3">
    <citation type="journal article" date="1987" name="Eur. J. Biochem.">
        <title>Purification of 2-hydroxyglutaryl-CoA dehydratase from Acidaminococcus fermentans. An iron-sulfur protein.</title>
        <authorList>
            <person name="Schweiger G."/>
            <person name="Dutscho R."/>
            <person name="Buckel W."/>
        </authorList>
    </citation>
    <scope>PROTEIN SEQUENCE OF 2-44</scope>
    <scope>FUNCTION</scope>
    <scope>CATALYTIC ACTIVITY</scope>
    <scope>COFACTOR</scope>
    <scope>SUBUNIT</scope>
    <scope>PATHWAY</scope>
</reference>
<reference key="4">
    <citation type="journal article" date="1980" name="Eur. J. Biochem.">
        <title>The reversible dehydration of (R)-2-hydroxyglutarate to (E)-glutaconate.</title>
        <authorList>
            <person name="Buckel W."/>
        </authorList>
    </citation>
    <scope>FUNCTION</scope>
    <scope>CATALYTIC ACTIVITY</scope>
    <source>
        <strain>ATCC 25085 / DSM 20731 / CCUG 9996 / CIP 106432 / VR4</strain>
    </source>
</reference>
<reference key="5">
    <citation type="journal article" date="1995" name="Eur. J. Biochem.">
        <title>Activation of (R)-2-hydroxyglutaryl-CoA dehydratase from Acidaminococcus fermentans.</title>
        <authorList>
            <person name="Mueller U."/>
            <person name="Buckel W."/>
        </authorList>
    </citation>
    <scope>FUNCTION</scope>
    <scope>CATALYTIC ACTIVITY</scope>
    <scope>ACTIVITY REGULATION</scope>
    <scope>COFACTOR</scope>
    <scope>SUBUNIT</scope>
    <source>
        <strain>ATCC 25085 / DSM 20731 / CCUG 9996 / CIP 106432 / VR4</strain>
    </source>
</reference>
<reference key="6">
    <citation type="journal article" date="2000" name="Eur. J. Biochem.">
        <title>The iron-sulfur clusters in 2-hydroxyglutaryl-CoA dehydratase from Acidaminococcus fermentans. Biochemical and spectroscopic investigations.</title>
        <authorList>
            <person name="Hans M."/>
            <person name="Buckel W."/>
            <person name="Bill E."/>
        </authorList>
    </citation>
    <scope>COFACTOR</scope>
</reference>